<keyword id="KW-1185">Reference proteome</keyword>
<keyword id="KW-0687">Ribonucleoprotein</keyword>
<keyword id="KW-0689">Ribosomal protein</keyword>
<organism>
    <name type="scientific">Helicobacter hepaticus (strain ATCC 51449 / 3B1)</name>
    <dbReference type="NCBI Taxonomy" id="235279"/>
    <lineage>
        <taxon>Bacteria</taxon>
        <taxon>Pseudomonadati</taxon>
        <taxon>Campylobacterota</taxon>
        <taxon>Epsilonproteobacteria</taxon>
        <taxon>Campylobacterales</taxon>
        <taxon>Helicobacteraceae</taxon>
        <taxon>Helicobacter</taxon>
    </lineage>
</organism>
<name>RL33_HELHP</name>
<sequence length="56" mass="6292">MAKGSTIKIGLKCSECGDINYSTTKNAKTNTEKLELKKFSPRLNKHTIHKEVKLKS</sequence>
<evidence type="ECO:0000255" key="1">
    <source>
        <dbReference type="HAMAP-Rule" id="MF_00294"/>
    </source>
</evidence>
<evidence type="ECO:0000305" key="2"/>
<reference key="1">
    <citation type="journal article" date="2003" name="Proc. Natl. Acad. Sci. U.S.A.">
        <title>The complete genome sequence of the carcinogenic bacterium Helicobacter hepaticus.</title>
        <authorList>
            <person name="Suerbaum S."/>
            <person name="Josenhans C."/>
            <person name="Sterzenbach T."/>
            <person name="Drescher B."/>
            <person name="Brandt P."/>
            <person name="Bell M."/>
            <person name="Droege M."/>
            <person name="Fartmann B."/>
            <person name="Fischer H.-P."/>
            <person name="Ge Z."/>
            <person name="Hoerster A."/>
            <person name="Holland R."/>
            <person name="Klein K."/>
            <person name="Koenig J."/>
            <person name="Macko L."/>
            <person name="Mendz G.L."/>
            <person name="Nyakatura G."/>
            <person name="Schauer D.B."/>
            <person name="Shen Z."/>
            <person name="Weber J."/>
            <person name="Frosch M."/>
            <person name="Fox J.G."/>
        </authorList>
    </citation>
    <scope>NUCLEOTIDE SEQUENCE [LARGE SCALE GENOMIC DNA]</scope>
    <source>
        <strain>ATCC 51449 / 3B1</strain>
    </source>
</reference>
<accession>Q7VJ75</accession>
<comment type="similarity">
    <text evidence="1">Belongs to the bacterial ribosomal protein bL33 family.</text>
</comment>
<feature type="chain" id="PRO_0000356480" description="Large ribosomal subunit protein bL33">
    <location>
        <begin position="1"/>
        <end position="56"/>
    </location>
</feature>
<dbReference type="EMBL" id="AE017125">
    <property type="protein sequence ID" value="AAP76965.1"/>
    <property type="molecule type" value="Genomic_DNA"/>
</dbReference>
<dbReference type="RefSeq" id="WP_002955417.1">
    <property type="nucleotide sequence ID" value="NC_004917.1"/>
</dbReference>
<dbReference type="SMR" id="Q7VJ75"/>
<dbReference type="STRING" id="235279.HH_0368"/>
<dbReference type="GeneID" id="66539958"/>
<dbReference type="KEGG" id="hhe:HH_0368"/>
<dbReference type="eggNOG" id="COG0267">
    <property type="taxonomic scope" value="Bacteria"/>
</dbReference>
<dbReference type="HOGENOM" id="CLU_190949_0_2_7"/>
<dbReference type="OrthoDB" id="21586at2"/>
<dbReference type="Proteomes" id="UP000002495">
    <property type="component" value="Chromosome"/>
</dbReference>
<dbReference type="GO" id="GO:0005737">
    <property type="term" value="C:cytoplasm"/>
    <property type="evidence" value="ECO:0007669"/>
    <property type="project" value="UniProtKB-ARBA"/>
</dbReference>
<dbReference type="GO" id="GO:1990904">
    <property type="term" value="C:ribonucleoprotein complex"/>
    <property type="evidence" value="ECO:0007669"/>
    <property type="project" value="UniProtKB-KW"/>
</dbReference>
<dbReference type="GO" id="GO:0005840">
    <property type="term" value="C:ribosome"/>
    <property type="evidence" value="ECO:0007669"/>
    <property type="project" value="UniProtKB-KW"/>
</dbReference>
<dbReference type="GO" id="GO:0003735">
    <property type="term" value="F:structural constituent of ribosome"/>
    <property type="evidence" value="ECO:0007669"/>
    <property type="project" value="InterPro"/>
</dbReference>
<dbReference type="GO" id="GO:0006412">
    <property type="term" value="P:translation"/>
    <property type="evidence" value="ECO:0007669"/>
    <property type="project" value="UniProtKB-UniRule"/>
</dbReference>
<dbReference type="Gene3D" id="2.20.28.120">
    <property type="entry name" value="Ribosomal protein L33"/>
    <property type="match status" value="1"/>
</dbReference>
<dbReference type="HAMAP" id="MF_00294">
    <property type="entry name" value="Ribosomal_bL33"/>
    <property type="match status" value="1"/>
</dbReference>
<dbReference type="InterPro" id="IPR001705">
    <property type="entry name" value="Ribosomal_bL33"/>
</dbReference>
<dbReference type="InterPro" id="IPR018264">
    <property type="entry name" value="Ribosomal_bL33_CS"/>
</dbReference>
<dbReference type="InterPro" id="IPR038584">
    <property type="entry name" value="Ribosomal_bL33_sf"/>
</dbReference>
<dbReference type="InterPro" id="IPR011332">
    <property type="entry name" value="Ribosomal_zn-bd"/>
</dbReference>
<dbReference type="NCBIfam" id="NF001764">
    <property type="entry name" value="PRK00504.1"/>
    <property type="match status" value="1"/>
</dbReference>
<dbReference type="NCBIfam" id="NF001860">
    <property type="entry name" value="PRK00595.1"/>
    <property type="match status" value="1"/>
</dbReference>
<dbReference type="NCBIfam" id="TIGR01023">
    <property type="entry name" value="rpmG_bact"/>
    <property type="match status" value="1"/>
</dbReference>
<dbReference type="PANTHER" id="PTHR43168">
    <property type="entry name" value="50S RIBOSOMAL PROTEIN L33, CHLOROPLASTIC"/>
    <property type="match status" value="1"/>
</dbReference>
<dbReference type="PANTHER" id="PTHR43168:SF6">
    <property type="entry name" value="LARGE RIBOSOMAL SUBUNIT PROTEIN BL33A"/>
    <property type="match status" value="1"/>
</dbReference>
<dbReference type="Pfam" id="PF00471">
    <property type="entry name" value="Ribosomal_L33"/>
    <property type="match status" value="1"/>
</dbReference>
<dbReference type="SUPFAM" id="SSF57829">
    <property type="entry name" value="Zn-binding ribosomal proteins"/>
    <property type="match status" value="1"/>
</dbReference>
<dbReference type="PROSITE" id="PS00582">
    <property type="entry name" value="RIBOSOMAL_L33"/>
    <property type="match status" value="1"/>
</dbReference>
<gene>
    <name evidence="1" type="primary">rpmG</name>
    <name type="ordered locus">HH_0368</name>
</gene>
<protein>
    <recommendedName>
        <fullName evidence="1">Large ribosomal subunit protein bL33</fullName>
    </recommendedName>
    <alternativeName>
        <fullName evidence="2">50S ribosomal protein L33</fullName>
    </alternativeName>
</protein>
<proteinExistence type="inferred from homology"/>